<sequence>MLYKNINEFEQVIDKTKRIMCLDFGEKKIGVALSDKTNLIAIPHSVYVRKNTRKDLGSLYGILIENDAGSMVIGLPLDLFGMGNELCDKVMLFANRMIKKYAINIYLHDERYSTAMATRVAKLANIKRKESQKIDDKIAAVLILQQVLDMVKIYQM</sequence>
<evidence type="ECO:0000255" key="1">
    <source>
        <dbReference type="HAMAP-Rule" id="MF_00651"/>
    </source>
</evidence>
<keyword id="KW-0963">Cytoplasm</keyword>
<keyword id="KW-0378">Hydrolase</keyword>
<keyword id="KW-0540">Nuclease</keyword>
<keyword id="KW-0690">Ribosome biogenesis</keyword>
<gene>
    <name type="ordered locus">Erum5640</name>
    <name type="ordered locus">ERWE_CDS_05910</name>
</gene>
<comment type="function">
    <text evidence="1">Could be a nuclease involved in processing of the 5'-end of pre-16S rRNA.</text>
</comment>
<comment type="subcellular location">
    <subcellularLocation>
        <location evidence="1">Cytoplasm</location>
    </subcellularLocation>
</comment>
<comment type="similarity">
    <text evidence="1">Belongs to the YqgF nuclease family.</text>
</comment>
<feature type="chain" id="PRO_0000172062" description="Putative pre-16S rRNA nuclease">
    <location>
        <begin position="1"/>
        <end position="156"/>
    </location>
</feature>
<protein>
    <recommendedName>
        <fullName evidence="1">Putative pre-16S rRNA nuclease</fullName>
        <ecNumber evidence="1">3.1.-.-</ecNumber>
    </recommendedName>
</protein>
<accession>Q5HAW7</accession>
<accession>Q5FER7</accession>
<dbReference type="EC" id="3.1.-.-" evidence="1"/>
<dbReference type="EMBL" id="CR767821">
    <property type="protein sequence ID" value="CAH58293.1"/>
    <property type="molecule type" value="Genomic_DNA"/>
</dbReference>
<dbReference type="EMBL" id="CR925678">
    <property type="protein sequence ID" value="CAI27085.1"/>
    <property type="molecule type" value="Genomic_DNA"/>
</dbReference>
<dbReference type="RefSeq" id="WP_011155244.1">
    <property type="nucleotide sequence ID" value="NC_005295.2"/>
</dbReference>
<dbReference type="SMR" id="Q5HAW7"/>
<dbReference type="GeneID" id="33057919"/>
<dbReference type="KEGG" id="eru:Erum5640"/>
<dbReference type="KEGG" id="erw:ERWE_CDS_05910"/>
<dbReference type="eggNOG" id="COG0816">
    <property type="taxonomic scope" value="Bacteria"/>
</dbReference>
<dbReference type="HOGENOM" id="CLU_098240_2_2_5"/>
<dbReference type="Proteomes" id="UP000001021">
    <property type="component" value="Chromosome"/>
</dbReference>
<dbReference type="GO" id="GO:0005829">
    <property type="term" value="C:cytosol"/>
    <property type="evidence" value="ECO:0007669"/>
    <property type="project" value="TreeGrafter"/>
</dbReference>
<dbReference type="GO" id="GO:0004518">
    <property type="term" value="F:nuclease activity"/>
    <property type="evidence" value="ECO:0007669"/>
    <property type="project" value="UniProtKB-KW"/>
</dbReference>
<dbReference type="GO" id="GO:0000967">
    <property type="term" value="P:rRNA 5'-end processing"/>
    <property type="evidence" value="ECO:0007669"/>
    <property type="project" value="UniProtKB-UniRule"/>
</dbReference>
<dbReference type="CDD" id="cd16964">
    <property type="entry name" value="YqgF"/>
    <property type="match status" value="1"/>
</dbReference>
<dbReference type="Gene3D" id="3.30.420.140">
    <property type="entry name" value="YqgF/RNase H-like domain"/>
    <property type="match status" value="1"/>
</dbReference>
<dbReference type="HAMAP" id="MF_00651">
    <property type="entry name" value="Nuclease_YqgF"/>
    <property type="match status" value="1"/>
</dbReference>
<dbReference type="InterPro" id="IPR012337">
    <property type="entry name" value="RNaseH-like_sf"/>
</dbReference>
<dbReference type="InterPro" id="IPR005227">
    <property type="entry name" value="YqgF"/>
</dbReference>
<dbReference type="InterPro" id="IPR006641">
    <property type="entry name" value="YqgF/RNaseH-like_dom"/>
</dbReference>
<dbReference type="InterPro" id="IPR037027">
    <property type="entry name" value="YqgF/RNaseH-like_dom_sf"/>
</dbReference>
<dbReference type="NCBIfam" id="TIGR00250">
    <property type="entry name" value="RNAse_H_YqgF"/>
    <property type="match status" value="1"/>
</dbReference>
<dbReference type="PANTHER" id="PTHR33317">
    <property type="entry name" value="POLYNUCLEOTIDYL TRANSFERASE, RIBONUCLEASE H-LIKE SUPERFAMILY PROTEIN"/>
    <property type="match status" value="1"/>
</dbReference>
<dbReference type="PANTHER" id="PTHR33317:SF4">
    <property type="entry name" value="POLYNUCLEOTIDYL TRANSFERASE, RIBONUCLEASE H-LIKE SUPERFAMILY PROTEIN"/>
    <property type="match status" value="1"/>
</dbReference>
<dbReference type="Pfam" id="PF03652">
    <property type="entry name" value="RuvX"/>
    <property type="match status" value="1"/>
</dbReference>
<dbReference type="SMART" id="SM00732">
    <property type="entry name" value="YqgFc"/>
    <property type="match status" value="1"/>
</dbReference>
<dbReference type="SUPFAM" id="SSF53098">
    <property type="entry name" value="Ribonuclease H-like"/>
    <property type="match status" value="1"/>
</dbReference>
<name>YQGF_EHRRW</name>
<organism>
    <name type="scientific">Ehrlichia ruminantium (strain Welgevonden)</name>
    <dbReference type="NCBI Taxonomy" id="254945"/>
    <lineage>
        <taxon>Bacteria</taxon>
        <taxon>Pseudomonadati</taxon>
        <taxon>Pseudomonadota</taxon>
        <taxon>Alphaproteobacteria</taxon>
        <taxon>Rickettsiales</taxon>
        <taxon>Anaplasmataceae</taxon>
        <taxon>Ehrlichia</taxon>
    </lineage>
</organism>
<proteinExistence type="inferred from homology"/>
<reference key="1">
    <citation type="journal article" date="2005" name="Proc. Natl. Acad. Sci. U.S.A.">
        <title>The genome of the heartwater agent Ehrlichia ruminantium contains multiple tandem repeats of actively variable copy number.</title>
        <authorList>
            <person name="Collins N.E."/>
            <person name="Liebenberg J."/>
            <person name="de Villiers E.P."/>
            <person name="Brayton K.A."/>
            <person name="Louw E."/>
            <person name="Pretorius A."/>
            <person name="Faber F.E."/>
            <person name="van Heerden H."/>
            <person name="Josemans A."/>
            <person name="van Kleef M."/>
            <person name="Steyn H.C."/>
            <person name="van Strijp M.F."/>
            <person name="Zweygarth E."/>
            <person name="Jongejan F."/>
            <person name="Maillard J.C."/>
            <person name="Berthier D."/>
            <person name="Botha M."/>
            <person name="Joubert F."/>
            <person name="Corton C.H."/>
            <person name="Thomson N.R."/>
            <person name="Allsopp M.T."/>
            <person name="Allsopp B.A."/>
        </authorList>
    </citation>
    <scope>NUCLEOTIDE SEQUENCE [LARGE SCALE GENOMIC DNA]</scope>
    <source>
        <strain>Welgevonden</strain>
    </source>
</reference>
<reference key="2">
    <citation type="journal article" date="2006" name="J. Bacteriol.">
        <title>Comparative genomic analysis of three strains of Ehrlichia ruminantium reveals an active process of genome size plasticity.</title>
        <authorList>
            <person name="Frutos R."/>
            <person name="Viari A."/>
            <person name="Ferraz C."/>
            <person name="Morgat A."/>
            <person name="Eychenie S."/>
            <person name="Kandassamy Y."/>
            <person name="Chantal I."/>
            <person name="Bensaid A."/>
            <person name="Coissac E."/>
            <person name="Vachiery N."/>
            <person name="Demaille J."/>
            <person name="Martinez D."/>
        </authorList>
    </citation>
    <scope>NUCLEOTIDE SEQUENCE [LARGE SCALE GENOMIC DNA]</scope>
    <source>
        <strain>Welgevonden</strain>
    </source>
</reference>